<name>HFLC_ECOLI</name>
<protein>
    <recommendedName>
        <fullName>Modulator of FtsH protease HflC</fullName>
    </recommendedName>
</protein>
<sequence length="334" mass="37650">MRKSVIAIIIIVLVVLYMSVFVVKEGERGITLRFGKVLRDDDNKPLVYEPGLHFKIPFIETVKMLDARIQTMDNQADRFVTKEKKDLIVDSYIKWRISDFSRYYLATGGGDISQAEVLLKRKFSDRLRSEIGRLDVKDIVTDSRGRLTLEVRDALNSGSAGTEDEVTTPAADNAIAEAAERVTAETKGKVPVINPNSMAALGIEVVDVRIKQINLPTEVSEAIYNRMRAEREAVARRHRSQGQEEAEKLRATADYEVTRTLAEAERQGRIMRGEGDAEAAKLFADAFSKDPDFYAFIRSLRAYENSFSGNQDVMVMSPDSDFFRYMKTPTSATR</sequence>
<proteinExistence type="evidence at protein level"/>
<comment type="function">
    <text evidence="2">HflC and HflK help govern the stability of phage lambda cII protein, and thereby control the lysogenization frequency of phage lambda. HflKC inhibits the SecY-degrading activity of FtsH, possibly helping quality control of integral membrane proteins.</text>
</comment>
<comment type="subunit">
    <text evidence="1 2 4">HflC and HflK interact to form a complex, originally called HflA, now called HflKC. HflKC interacts with FtsH; complex formation is stimulated by ATP, and with YccA.</text>
</comment>
<comment type="interaction">
    <interactant intactId="EBI-551642">
        <id>P0ABC3</id>
    </interactant>
    <interactant intactId="EBI-548381">
        <id>P0AAI3</id>
        <label>ftsH</label>
    </interactant>
    <organismsDiffer>false</organismsDiffer>
    <experiments>9</experiments>
</comment>
<comment type="interaction">
    <interactant intactId="EBI-551642">
        <id>P0ABC3</id>
    </interactant>
    <interactant intactId="EBI-558599">
        <id>P0ABC7</id>
        <label>hflK</label>
    </interactant>
    <organismsDiffer>false</organismsDiffer>
    <experiments>2</experiments>
</comment>
<comment type="subcellular location">
    <subcellularLocation>
        <location evidence="2">Cell inner membrane</location>
        <topology evidence="2">Single-pass type II membrane protein</topology>
    </subcellularLocation>
</comment>
<comment type="miscellaneous">
    <text>Integration of this protein into the membrane depends on SecA, SecY and SecD but not on SecB or FtsY. HflC is unstable in the absence of HflK.</text>
</comment>
<comment type="similarity">
    <text evidence="5">Belongs to the band 7/mec-2 family. HflC subfamily.</text>
</comment>
<comment type="caution">
    <text evidence="6">Was originally (PubMed:2973057) thought to be a protease. However, removal of residues 165-200 (a ClpP-protease-like motif) does not alter the lysogenization process, and in vitro studies show no evidence of a protease activity for the isolated HflKC complex.</text>
</comment>
<organism>
    <name type="scientific">Escherichia coli (strain K12)</name>
    <dbReference type="NCBI Taxonomy" id="83333"/>
    <lineage>
        <taxon>Bacteria</taxon>
        <taxon>Pseudomonadati</taxon>
        <taxon>Pseudomonadota</taxon>
        <taxon>Gammaproteobacteria</taxon>
        <taxon>Enterobacterales</taxon>
        <taxon>Enterobacteriaceae</taxon>
        <taxon>Escherichia</taxon>
    </lineage>
</organism>
<evidence type="ECO:0000269" key="1">
    <source>
    </source>
</evidence>
<evidence type="ECO:0000269" key="2">
    <source>
    </source>
</evidence>
<evidence type="ECO:0000269" key="3">
    <source>
    </source>
</evidence>
<evidence type="ECO:0000269" key="4">
    <source>
    </source>
</evidence>
<evidence type="ECO:0000305" key="5"/>
<evidence type="ECO:0000305" key="6">
    <source>
    </source>
</evidence>
<evidence type="ECO:0007829" key="7">
    <source>
        <dbReference type="PDB" id="7VHP"/>
    </source>
</evidence>
<gene>
    <name type="primary">hflC</name>
    <name type="synonym">hflA</name>
    <name type="ordered locus">b4175</name>
    <name type="ordered locus">JW4133</name>
</gene>
<dbReference type="EMBL" id="U00005">
    <property type="protein sequence ID" value="AAC43400.1"/>
    <property type="molecule type" value="Unassigned_DNA"/>
</dbReference>
<dbReference type="EMBL" id="U14003">
    <property type="protein sequence ID" value="AAA97071.1"/>
    <property type="molecule type" value="Genomic_DNA"/>
</dbReference>
<dbReference type="EMBL" id="U00096">
    <property type="protein sequence ID" value="AAC77132.1"/>
    <property type="molecule type" value="Genomic_DNA"/>
</dbReference>
<dbReference type="EMBL" id="AP009048">
    <property type="protein sequence ID" value="BAE78176.1"/>
    <property type="molecule type" value="Genomic_DNA"/>
</dbReference>
<dbReference type="PIR" id="C43653">
    <property type="entry name" value="C43653"/>
</dbReference>
<dbReference type="RefSeq" id="NP_418596.1">
    <property type="nucleotide sequence ID" value="NC_000913.3"/>
</dbReference>
<dbReference type="RefSeq" id="WP_001232412.1">
    <property type="nucleotide sequence ID" value="NZ_STEB01000013.1"/>
</dbReference>
<dbReference type="PDB" id="7VHP">
    <property type="method" value="EM"/>
    <property type="resolution" value="3.27 A"/>
    <property type="chains" value="G/H/I/P/Q/R/k/l/m/n/o/p=1-334"/>
</dbReference>
<dbReference type="PDB" id="7VHQ">
    <property type="method" value="EM"/>
    <property type="resolution" value="3.27 A"/>
    <property type="chains" value="G/H/I=1-329"/>
</dbReference>
<dbReference type="PDB" id="7WI3">
    <property type="method" value="EM"/>
    <property type="resolution" value="4.00 A"/>
    <property type="chains" value="A/C/D/M/O/P/Y/Z/c/d/e/f=1-334"/>
</dbReference>
<dbReference type="PDB" id="9CZ1">
    <property type="method" value="EM"/>
    <property type="resolution" value="3.50 A"/>
    <property type="chains" value="XB/XD/XF/XH/XJ/XL/XN/XP/XR/XT/XV/XX=1-334"/>
</dbReference>
<dbReference type="PDB" id="9CZ2">
    <property type="method" value="EM"/>
    <property type="resolution" value="4.40 A"/>
    <property type="chains" value="XB/XD/XF/XH/XJ/XL/XN/XP/XR/XT/XV/XX=1-334"/>
</dbReference>
<dbReference type="PDBsum" id="7VHP"/>
<dbReference type="PDBsum" id="7VHQ"/>
<dbReference type="PDBsum" id="7WI3"/>
<dbReference type="PDBsum" id="9CZ1"/>
<dbReference type="PDBsum" id="9CZ2"/>
<dbReference type="EMDB" id="EMD-32520"/>
<dbReference type="SMR" id="P0ABC3"/>
<dbReference type="BioGRID" id="4262706">
    <property type="interactions" value="218"/>
</dbReference>
<dbReference type="ComplexPortal" id="CPX-5046">
    <property type="entry name" value="FtsH-HflKC complex"/>
</dbReference>
<dbReference type="DIP" id="DIP-35995N"/>
<dbReference type="FunCoup" id="P0ABC3">
    <property type="interactions" value="187"/>
</dbReference>
<dbReference type="IntAct" id="P0ABC3">
    <property type="interactions" value="9"/>
</dbReference>
<dbReference type="MINT" id="P0ABC3"/>
<dbReference type="STRING" id="511145.b4175"/>
<dbReference type="MEROPS" id="I87.001"/>
<dbReference type="jPOST" id="P0ABC3"/>
<dbReference type="PaxDb" id="511145-b4175"/>
<dbReference type="EnsemblBacteria" id="AAC77132">
    <property type="protein sequence ID" value="AAC77132"/>
    <property type="gene ID" value="b4175"/>
</dbReference>
<dbReference type="GeneID" id="93777646"/>
<dbReference type="GeneID" id="948697"/>
<dbReference type="KEGG" id="ecj:JW4133"/>
<dbReference type="KEGG" id="eco:b4175"/>
<dbReference type="KEGG" id="ecoc:C3026_22560"/>
<dbReference type="PATRIC" id="fig|1411691.4.peg.2526"/>
<dbReference type="EchoBASE" id="EB0430"/>
<dbReference type="eggNOG" id="COG0330">
    <property type="taxonomic scope" value="Bacteria"/>
</dbReference>
<dbReference type="HOGENOM" id="CLU_059167_3_0_6"/>
<dbReference type="InParanoid" id="P0ABC3"/>
<dbReference type="OMA" id="WDGDPNQ"/>
<dbReference type="OrthoDB" id="9812991at2"/>
<dbReference type="PhylomeDB" id="P0ABC3"/>
<dbReference type="BioCyc" id="EcoCyc:EG10435-MONOMER"/>
<dbReference type="BioCyc" id="MetaCyc:EG10435-MONOMER"/>
<dbReference type="PRO" id="PR:P0ABC3"/>
<dbReference type="Proteomes" id="UP000000625">
    <property type="component" value="Chromosome"/>
</dbReference>
<dbReference type="GO" id="GO:0098796">
    <property type="term" value="C:membrane protein complex"/>
    <property type="evidence" value="ECO:0000353"/>
    <property type="project" value="EcoCyc"/>
</dbReference>
<dbReference type="GO" id="GO:0098797">
    <property type="term" value="C:plasma membrane protein complex"/>
    <property type="evidence" value="ECO:0000353"/>
    <property type="project" value="ComplexPortal"/>
</dbReference>
<dbReference type="GO" id="GO:0009408">
    <property type="term" value="P:response to heat"/>
    <property type="evidence" value="ECO:0000270"/>
    <property type="project" value="EcoCyc"/>
</dbReference>
<dbReference type="CDD" id="cd03405">
    <property type="entry name" value="SPFH_HflC"/>
    <property type="match status" value="1"/>
</dbReference>
<dbReference type="Gene3D" id="3.30.479.30">
    <property type="entry name" value="Band 7 domain"/>
    <property type="match status" value="1"/>
</dbReference>
<dbReference type="InterPro" id="IPR001107">
    <property type="entry name" value="Band_7"/>
</dbReference>
<dbReference type="InterPro" id="IPR036013">
    <property type="entry name" value="Band_7/SPFH_dom_sf"/>
</dbReference>
<dbReference type="InterPro" id="IPR010200">
    <property type="entry name" value="HflC"/>
</dbReference>
<dbReference type="NCBIfam" id="TIGR01932">
    <property type="entry name" value="hflC"/>
    <property type="match status" value="1"/>
</dbReference>
<dbReference type="NCBIfam" id="NF008259">
    <property type="entry name" value="PRK11029.1"/>
    <property type="match status" value="1"/>
</dbReference>
<dbReference type="PANTHER" id="PTHR42911">
    <property type="entry name" value="MODULATOR OF FTSH PROTEASE HFLC"/>
    <property type="match status" value="1"/>
</dbReference>
<dbReference type="PANTHER" id="PTHR42911:SF1">
    <property type="entry name" value="MODULATOR OF FTSH PROTEASE HFLC"/>
    <property type="match status" value="1"/>
</dbReference>
<dbReference type="Pfam" id="PF01145">
    <property type="entry name" value="Band_7"/>
    <property type="match status" value="1"/>
</dbReference>
<dbReference type="PIRSF" id="PIRSF005651">
    <property type="entry name" value="HflC"/>
    <property type="match status" value="1"/>
</dbReference>
<dbReference type="SMART" id="SM00244">
    <property type="entry name" value="PHB"/>
    <property type="match status" value="1"/>
</dbReference>
<dbReference type="SUPFAM" id="SSF117892">
    <property type="entry name" value="Band 7/SPFH domain"/>
    <property type="match status" value="2"/>
</dbReference>
<keyword id="KW-0002">3D-structure</keyword>
<keyword id="KW-0997">Cell inner membrane</keyword>
<keyword id="KW-1003">Cell membrane</keyword>
<keyword id="KW-0472">Membrane</keyword>
<keyword id="KW-1185">Reference proteome</keyword>
<keyword id="KW-0735">Signal-anchor</keyword>
<keyword id="KW-0812">Transmembrane</keyword>
<keyword id="KW-1133">Transmembrane helix</keyword>
<reference key="1">
    <citation type="journal article" date="1993" name="Proc. Natl. Acad. Sci. U.S.A.">
        <title>The Escherichia coli hflA locus encodes a putative GTP-binding protein and two membrane proteins, one of which contains a protease-like domain.</title>
        <authorList>
            <person name="Noble J.A."/>
            <person name="Innis M.A."/>
            <person name="Koonin E.V."/>
            <person name="Rudd K.E."/>
            <person name="Banuett F."/>
            <person name="Herskowitz I."/>
        </authorList>
    </citation>
    <scope>NUCLEOTIDE SEQUENCE [GENOMIC DNA]</scope>
</reference>
<reference key="2">
    <citation type="journal article" date="1995" name="Nucleic Acids Res.">
        <title>Analysis of the Escherichia coli genome VI: DNA sequence of the region from 92.8 through 100 minutes.</title>
        <authorList>
            <person name="Burland V.D."/>
            <person name="Plunkett G. III"/>
            <person name="Sofia H.J."/>
            <person name="Daniels D.L."/>
            <person name="Blattner F.R."/>
        </authorList>
    </citation>
    <scope>NUCLEOTIDE SEQUENCE [LARGE SCALE GENOMIC DNA]</scope>
    <source>
        <strain>K12 / MG1655 / ATCC 47076</strain>
    </source>
</reference>
<reference key="3">
    <citation type="journal article" date="1997" name="Science">
        <title>The complete genome sequence of Escherichia coli K-12.</title>
        <authorList>
            <person name="Blattner F.R."/>
            <person name="Plunkett G. III"/>
            <person name="Bloch C.A."/>
            <person name="Perna N.T."/>
            <person name="Burland V."/>
            <person name="Riley M."/>
            <person name="Collado-Vides J."/>
            <person name="Glasner J.D."/>
            <person name="Rode C.K."/>
            <person name="Mayhew G.F."/>
            <person name="Gregor J."/>
            <person name="Davis N.W."/>
            <person name="Kirkpatrick H.A."/>
            <person name="Goeden M.A."/>
            <person name="Rose D.J."/>
            <person name="Mau B."/>
            <person name="Shao Y."/>
        </authorList>
    </citation>
    <scope>NUCLEOTIDE SEQUENCE [LARGE SCALE GENOMIC DNA]</scope>
    <source>
        <strain>K12 / MG1655 / ATCC 47076</strain>
    </source>
</reference>
<reference key="4">
    <citation type="journal article" date="2006" name="Mol. Syst. Biol.">
        <title>Highly accurate genome sequences of Escherichia coli K-12 strains MG1655 and W3110.</title>
        <authorList>
            <person name="Hayashi K."/>
            <person name="Morooka N."/>
            <person name="Yamamoto Y."/>
            <person name="Fujita K."/>
            <person name="Isono K."/>
            <person name="Choi S."/>
            <person name="Ohtsubo E."/>
            <person name="Baba T."/>
            <person name="Wanner B.L."/>
            <person name="Mori H."/>
            <person name="Horiuchi T."/>
        </authorList>
    </citation>
    <scope>NUCLEOTIDE SEQUENCE [LARGE SCALE GENOMIC DNA]</scope>
    <source>
        <strain>K12 / W3110 / ATCC 27325 / DSM 5911</strain>
    </source>
</reference>
<reference key="5">
    <citation type="journal article" date="1987" name="J. Bacteriol.">
        <title>Identification of polypeptides encoded by an Escherichia coli locus (hflA) that governs the lysis-lysogeny decision of bacteriophage lambda.</title>
        <authorList>
            <person name="Banuett F."/>
            <person name="Herskowitz I."/>
        </authorList>
    </citation>
    <scope>CHARACTERIZATION</scope>
</reference>
<reference key="6">
    <citation type="journal article" date="1988" name="Proc. Natl. Acad. Sci. U.S.A.">
        <title>Cleavage of the cII protein of phage lambda by purified HflA protease: control of the switch between lysis and lysogeny.</title>
        <authorList>
            <person name="Cheng H.H."/>
            <person name="Muhlrad P.J."/>
            <person name="Hoyt M.A."/>
            <person name="Echols H."/>
        </authorList>
    </citation>
    <scope>INTERACTION WITH HFLK</scope>
    <scope>SUGGESTION OF PROTEASE ACTIVITY</scope>
    <source>
        <strain>W3102</strain>
        <strain>X9368</strain>
    </source>
</reference>
<reference key="7">
    <citation type="journal article" date="1996" name="EMBO J.">
        <title>A protease complex in the Escherichia coli plasma membrane: HflKC (HflA) forms a complex with FtsH (HflB), regulating its proteolytic activity against SecY.</title>
        <authorList>
            <person name="Kihara A."/>
            <person name="Akiyama Y."/>
            <person name="Ito K."/>
        </authorList>
    </citation>
    <scope>FUNCTION</scope>
    <scope>INTERACTION WITH HFLK AND FTSH</scope>
    <scope>SUBCELLULAR LOCATION</scope>
    <scope>MUTAGENESIS OF GLY-145</scope>
    <source>
        <strain>K12 / CSH26 / AD16</strain>
    </source>
</reference>
<reference key="8">
    <citation type="journal article" date="1997" name="Proc. Natl. Acad. Sci. U.S.A.">
        <title>Host regulation of lysogenic decision in bacteriophage lambda: transmembrane modulation of FtsH (HflB), the cII degrading protease, by HflKC (HflA).</title>
        <authorList>
            <person name="Kihara A."/>
            <person name="Akiyama Y."/>
            <person name="Ito K."/>
        </authorList>
    </citation>
    <scope>TOPOLOGY</scope>
    <scope>LACK OF PROTEASE ACTIVITY</scope>
    <scope>MUTAGENESIS OF 165-GLU--ALA-200</scope>
    <source>
        <strain>K12 / CSH26 / AD16</strain>
    </source>
</reference>
<reference key="9">
    <citation type="journal article" date="1998" name="J. Biol. Chem.">
        <title>Translocation, folding, and stability of the HflKC complex with signal anchor topogenic sequences.</title>
        <authorList>
            <person name="Kihara A."/>
            <person name="Ito K."/>
        </authorList>
    </citation>
    <scope>INSTABILITY IN THE ABSENCE OF HFLK</scope>
    <scope>MEMBRANE TRANSLOCATION MECHANISM</scope>
    <source>
        <strain>K12 / CSH26 / AD16</strain>
        <strain>K12 / MC4100</strain>
    </source>
</reference>
<reference key="10">
    <citation type="journal article" date="1998" name="J. Mol. Biol.">
        <title>Different pathways for protein degradation by the FtsH/HflKC membrane-embedded protease complex: an implication from the interference by a mutant form of a new substrate protein, YccA.</title>
        <authorList>
            <person name="Kihara A."/>
            <person name="Akiyama Y."/>
            <person name="Ito K."/>
        </authorList>
    </citation>
    <scope>INTERACTION WITH YCCA</scope>
    <source>
        <strain>K12 / CSH26 / AD16</strain>
    </source>
</reference>
<reference key="11">
    <citation type="journal article" date="2009" name="J. Biochem.">
        <title>Quality control of cytoplasmic membrane proteins in Escherichia coli.</title>
        <authorList>
            <person name="Akiyama Y."/>
        </authorList>
    </citation>
    <scope>REVIEW</scope>
</reference>
<feature type="chain" id="PRO_0000094073" description="Modulator of FtsH protease HflC">
    <location>
        <begin position="1"/>
        <end position="334"/>
    </location>
</feature>
<feature type="topological domain" description="Cytoplasmic" evidence="3">
    <location>
        <begin position="1"/>
        <end position="2"/>
    </location>
</feature>
<feature type="transmembrane region" description="Helical; Signal-anchor for type II membrane protein" evidence="5">
    <location>
        <begin position="3"/>
        <end position="23"/>
    </location>
</feature>
<feature type="topological domain" description="Periplasmic" evidence="3">
    <location>
        <begin position="24"/>
        <end position="334"/>
    </location>
</feature>
<feature type="mutagenesis site" description="In hflC9; stabilizes overproduced SecY but not overproduced cII protein." evidence="2">
    <original>G</original>
    <variation>A</variation>
    <location>
        <position position="145"/>
    </location>
</feature>
<feature type="mutagenesis site" description="No effect on phage lambda lysogenization frequency." evidence="3">
    <location>
        <begin position="165"/>
        <end position="200"/>
    </location>
</feature>
<feature type="helix" evidence="7">
    <location>
        <begin position="3"/>
        <end position="19"/>
    </location>
</feature>
<feature type="strand" evidence="7">
    <location>
        <begin position="20"/>
        <end position="22"/>
    </location>
</feature>
<feature type="strand" evidence="7">
    <location>
        <begin position="27"/>
        <end position="37"/>
    </location>
</feature>
<feature type="turn" evidence="7">
    <location>
        <begin position="41"/>
        <end position="43"/>
    </location>
</feature>
<feature type="strand" evidence="7">
    <location>
        <begin position="50"/>
        <end position="54"/>
    </location>
</feature>
<feature type="turn" evidence="7">
    <location>
        <begin position="57"/>
        <end position="59"/>
    </location>
</feature>
<feature type="strand" evidence="7">
    <location>
        <begin position="60"/>
        <end position="66"/>
    </location>
</feature>
<feature type="strand" evidence="7">
    <location>
        <begin position="68"/>
        <end position="80"/>
    </location>
</feature>
<feature type="strand" evidence="7">
    <location>
        <begin position="86"/>
        <end position="98"/>
    </location>
</feature>
<feature type="helix" evidence="7">
    <location>
        <begin position="100"/>
        <end position="106"/>
    </location>
</feature>
<feature type="helix" evidence="7">
    <location>
        <begin position="108"/>
        <end position="110"/>
    </location>
</feature>
<feature type="helix" evidence="7">
    <location>
        <begin position="112"/>
        <end position="132"/>
    </location>
</feature>
<feature type="helix" evidence="7">
    <location>
        <begin position="136"/>
        <end position="141"/>
    </location>
</feature>
<feature type="helix" evidence="7">
    <location>
        <begin position="146"/>
        <end position="156"/>
    </location>
</feature>
<feature type="turn" evidence="7">
    <location>
        <begin position="198"/>
        <end position="202"/>
    </location>
</feature>
<feature type="strand" evidence="7">
    <location>
        <begin position="203"/>
        <end position="214"/>
    </location>
</feature>
<feature type="helix" evidence="7">
    <location>
        <begin position="217"/>
        <end position="288"/>
    </location>
</feature>
<feature type="helix" evidence="7">
    <location>
        <begin position="291"/>
        <end position="307"/>
    </location>
</feature>
<feature type="strand" evidence="7">
    <location>
        <begin position="309"/>
        <end position="311"/>
    </location>
</feature>
<feature type="strand" evidence="7">
    <location>
        <begin position="313"/>
        <end position="315"/>
    </location>
</feature>
<feature type="helix" evidence="7">
    <location>
        <begin position="321"/>
        <end position="325"/>
    </location>
</feature>
<accession>P0ABC3</accession>
<accession>P25661</accession>
<accession>Q2M6D0</accession>